<proteinExistence type="inferred from homology"/>
<comment type="function">
    <text evidence="1">Forms part of the ribosomal stalk which helps the ribosome interact with GTP-bound translation factors.</text>
</comment>
<comment type="subunit">
    <text evidence="1">Part of the ribosomal stalk of the 50S ribosomal subunit. Interacts with L10 and the large rRNA to form the base of the stalk. L10 forms an elongated spine to which L12 dimers bind in a sequential fashion forming a multimeric L10(L12)X complex.</text>
</comment>
<comment type="PTM">
    <text evidence="1">One or more lysine residues are methylated.</text>
</comment>
<comment type="similarity">
    <text evidence="1">Belongs to the universal ribosomal protein uL11 family.</text>
</comment>
<name>RL11_ECO81</name>
<dbReference type="EMBL" id="CU928162">
    <property type="protein sequence ID" value="CAR10797.2"/>
    <property type="molecule type" value="Genomic_DNA"/>
</dbReference>
<dbReference type="RefSeq" id="WP_001085926.1">
    <property type="nucleotide sequence ID" value="NC_011745.1"/>
</dbReference>
<dbReference type="SMR" id="B7MRA9"/>
<dbReference type="GeneID" id="93777911"/>
<dbReference type="KEGG" id="ecq:ECED1_4690"/>
<dbReference type="HOGENOM" id="CLU_074237_2_0_6"/>
<dbReference type="Proteomes" id="UP000000748">
    <property type="component" value="Chromosome"/>
</dbReference>
<dbReference type="GO" id="GO:0022625">
    <property type="term" value="C:cytosolic large ribosomal subunit"/>
    <property type="evidence" value="ECO:0007669"/>
    <property type="project" value="TreeGrafter"/>
</dbReference>
<dbReference type="GO" id="GO:0070180">
    <property type="term" value="F:large ribosomal subunit rRNA binding"/>
    <property type="evidence" value="ECO:0007669"/>
    <property type="project" value="UniProtKB-UniRule"/>
</dbReference>
<dbReference type="GO" id="GO:0003735">
    <property type="term" value="F:structural constituent of ribosome"/>
    <property type="evidence" value="ECO:0007669"/>
    <property type="project" value="InterPro"/>
</dbReference>
<dbReference type="GO" id="GO:0006412">
    <property type="term" value="P:translation"/>
    <property type="evidence" value="ECO:0007669"/>
    <property type="project" value="UniProtKB-UniRule"/>
</dbReference>
<dbReference type="CDD" id="cd00349">
    <property type="entry name" value="Ribosomal_L11"/>
    <property type="match status" value="1"/>
</dbReference>
<dbReference type="FunFam" id="1.10.10.250:FF:000001">
    <property type="entry name" value="50S ribosomal protein L11"/>
    <property type="match status" value="1"/>
</dbReference>
<dbReference type="FunFam" id="3.30.1550.10:FF:000001">
    <property type="entry name" value="50S ribosomal protein L11"/>
    <property type="match status" value="1"/>
</dbReference>
<dbReference type="Gene3D" id="1.10.10.250">
    <property type="entry name" value="Ribosomal protein L11, C-terminal domain"/>
    <property type="match status" value="1"/>
</dbReference>
<dbReference type="Gene3D" id="3.30.1550.10">
    <property type="entry name" value="Ribosomal protein L11/L12, N-terminal domain"/>
    <property type="match status" value="1"/>
</dbReference>
<dbReference type="HAMAP" id="MF_00736">
    <property type="entry name" value="Ribosomal_uL11"/>
    <property type="match status" value="1"/>
</dbReference>
<dbReference type="InterPro" id="IPR000911">
    <property type="entry name" value="Ribosomal_uL11"/>
</dbReference>
<dbReference type="InterPro" id="IPR006519">
    <property type="entry name" value="Ribosomal_uL11_bac-typ"/>
</dbReference>
<dbReference type="InterPro" id="IPR020783">
    <property type="entry name" value="Ribosomal_uL11_C"/>
</dbReference>
<dbReference type="InterPro" id="IPR036769">
    <property type="entry name" value="Ribosomal_uL11_C_sf"/>
</dbReference>
<dbReference type="InterPro" id="IPR020785">
    <property type="entry name" value="Ribosomal_uL11_CS"/>
</dbReference>
<dbReference type="InterPro" id="IPR020784">
    <property type="entry name" value="Ribosomal_uL11_N"/>
</dbReference>
<dbReference type="InterPro" id="IPR036796">
    <property type="entry name" value="Ribosomal_uL11_N_sf"/>
</dbReference>
<dbReference type="NCBIfam" id="TIGR01632">
    <property type="entry name" value="L11_bact"/>
    <property type="match status" value="1"/>
</dbReference>
<dbReference type="PANTHER" id="PTHR11661">
    <property type="entry name" value="60S RIBOSOMAL PROTEIN L12"/>
    <property type="match status" value="1"/>
</dbReference>
<dbReference type="PANTHER" id="PTHR11661:SF1">
    <property type="entry name" value="LARGE RIBOSOMAL SUBUNIT PROTEIN UL11M"/>
    <property type="match status" value="1"/>
</dbReference>
<dbReference type="Pfam" id="PF00298">
    <property type="entry name" value="Ribosomal_L11"/>
    <property type="match status" value="1"/>
</dbReference>
<dbReference type="Pfam" id="PF03946">
    <property type="entry name" value="Ribosomal_L11_N"/>
    <property type="match status" value="1"/>
</dbReference>
<dbReference type="SMART" id="SM00649">
    <property type="entry name" value="RL11"/>
    <property type="match status" value="1"/>
</dbReference>
<dbReference type="SUPFAM" id="SSF54747">
    <property type="entry name" value="Ribosomal L11/L12e N-terminal domain"/>
    <property type="match status" value="1"/>
</dbReference>
<dbReference type="SUPFAM" id="SSF46906">
    <property type="entry name" value="Ribosomal protein L11, C-terminal domain"/>
    <property type="match status" value="1"/>
</dbReference>
<dbReference type="PROSITE" id="PS00359">
    <property type="entry name" value="RIBOSOMAL_L11"/>
    <property type="match status" value="1"/>
</dbReference>
<reference key="1">
    <citation type="journal article" date="2009" name="PLoS Genet.">
        <title>Organised genome dynamics in the Escherichia coli species results in highly diverse adaptive paths.</title>
        <authorList>
            <person name="Touchon M."/>
            <person name="Hoede C."/>
            <person name="Tenaillon O."/>
            <person name="Barbe V."/>
            <person name="Baeriswyl S."/>
            <person name="Bidet P."/>
            <person name="Bingen E."/>
            <person name="Bonacorsi S."/>
            <person name="Bouchier C."/>
            <person name="Bouvet O."/>
            <person name="Calteau A."/>
            <person name="Chiapello H."/>
            <person name="Clermont O."/>
            <person name="Cruveiller S."/>
            <person name="Danchin A."/>
            <person name="Diard M."/>
            <person name="Dossat C."/>
            <person name="Karoui M.E."/>
            <person name="Frapy E."/>
            <person name="Garry L."/>
            <person name="Ghigo J.M."/>
            <person name="Gilles A.M."/>
            <person name="Johnson J."/>
            <person name="Le Bouguenec C."/>
            <person name="Lescat M."/>
            <person name="Mangenot S."/>
            <person name="Martinez-Jehanne V."/>
            <person name="Matic I."/>
            <person name="Nassif X."/>
            <person name="Oztas S."/>
            <person name="Petit M.A."/>
            <person name="Pichon C."/>
            <person name="Rouy Z."/>
            <person name="Ruf C.S."/>
            <person name="Schneider D."/>
            <person name="Tourret J."/>
            <person name="Vacherie B."/>
            <person name="Vallenet D."/>
            <person name="Medigue C."/>
            <person name="Rocha E.P.C."/>
            <person name="Denamur E."/>
        </authorList>
    </citation>
    <scope>NUCLEOTIDE SEQUENCE [LARGE SCALE GENOMIC DNA]</scope>
    <source>
        <strain>ED1a</strain>
    </source>
</reference>
<gene>
    <name evidence="1" type="primary">rplK</name>
    <name type="ordered locus">ECED1_4690</name>
</gene>
<sequence length="142" mass="14875">MAKKVQAYVKLQVAAGMANPSPPVGPALGQQGVNIMEFCKAFNAKTDSIEKGLPIPVVITVYADRSFTFVTKTPPAAVLLKKAAGIKSGSGKPNKDKVGKISRAQLQEIAQTKAADMTGADIEAMTRSIEGTARSMGLVVED</sequence>
<protein>
    <recommendedName>
        <fullName evidence="1">Large ribosomal subunit protein uL11</fullName>
    </recommendedName>
    <alternativeName>
        <fullName evidence="2">50S ribosomal protein L11</fullName>
    </alternativeName>
</protein>
<feature type="chain" id="PRO_1000195637" description="Large ribosomal subunit protein uL11">
    <location>
        <begin position="1"/>
        <end position="142"/>
    </location>
</feature>
<accession>B7MRA9</accession>
<evidence type="ECO:0000255" key="1">
    <source>
        <dbReference type="HAMAP-Rule" id="MF_00736"/>
    </source>
</evidence>
<evidence type="ECO:0000305" key="2"/>
<organism>
    <name type="scientific">Escherichia coli O81 (strain ED1a)</name>
    <dbReference type="NCBI Taxonomy" id="585397"/>
    <lineage>
        <taxon>Bacteria</taxon>
        <taxon>Pseudomonadati</taxon>
        <taxon>Pseudomonadota</taxon>
        <taxon>Gammaproteobacteria</taxon>
        <taxon>Enterobacterales</taxon>
        <taxon>Enterobacteriaceae</taxon>
        <taxon>Escherichia</taxon>
    </lineage>
</organism>
<keyword id="KW-0488">Methylation</keyword>
<keyword id="KW-0687">Ribonucleoprotein</keyword>
<keyword id="KW-0689">Ribosomal protein</keyword>
<keyword id="KW-0694">RNA-binding</keyword>
<keyword id="KW-0699">rRNA-binding</keyword>